<proteinExistence type="inferred from homology"/>
<dbReference type="EC" id="3.5.4.5" evidence="1"/>
<dbReference type="EMBL" id="CP000891">
    <property type="protein sequence ID" value="ABX48889.1"/>
    <property type="molecule type" value="Genomic_DNA"/>
</dbReference>
<dbReference type="RefSeq" id="WP_006087443.1">
    <property type="nucleotide sequence ID" value="NC_009997.1"/>
</dbReference>
<dbReference type="SMR" id="A9KXF0"/>
<dbReference type="GeneID" id="11771940"/>
<dbReference type="KEGG" id="sbn:Sbal195_1716"/>
<dbReference type="HOGENOM" id="CLU_052424_0_0_6"/>
<dbReference type="Proteomes" id="UP000000770">
    <property type="component" value="Chromosome"/>
</dbReference>
<dbReference type="GO" id="GO:0005829">
    <property type="term" value="C:cytosol"/>
    <property type="evidence" value="ECO:0007669"/>
    <property type="project" value="TreeGrafter"/>
</dbReference>
<dbReference type="GO" id="GO:0004126">
    <property type="term" value="F:cytidine deaminase activity"/>
    <property type="evidence" value="ECO:0007669"/>
    <property type="project" value="UniProtKB-UniRule"/>
</dbReference>
<dbReference type="GO" id="GO:0042802">
    <property type="term" value="F:identical protein binding"/>
    <property type="evidence" value="ECO:0007669"/>
    <property type="project" value="UniProtKB-ARBA"/>
</dbReference>
<dbReference type="GO" id="GO:0008270">
    <property type="term" value="F:zinc ion binding"/>
    <property type="evidence" value="ECO:0007669"/>
    <property type="project" value="UniProtKB-UniRule"/>
</dbReference>
<dbReference type="GO" id="GO:0009972">
    <property type="term" value="P:cytidine deamination"/>
    <property type="evidence" value="ECO:0007669"/>
    <property type="project" value="InterPro"/>
</dbReference>
<dbReference type="CDD" id="cd01283">
    <property type="entry name" value="cytidine_deaminase"/>
    <property type="match status" value="1"/>
</dbReference>
<dbReference type="FunFam" id="3.40.140.10:FF:000007">
    <property type="entry name" value="Cytidine deaminase"/>
    <property type="match status" value="1"/>
</dbReference>
<dbReference type="Gene3D" id="3.40.140.10">
    <property type="entry name" value="Cytidine Deaminase, domain 2"/>
    <property type="match status" value="2"/>
</dbReference>
<dbReference type="HAMAP" id="MF_01558">
    <property type="entry name" value="Cyt_deam"/>
    <property type="match status" value="1"/>
</dbReference>
<dbReference type="InterPro" id="IPR016192">
    <property type="entry name" value="APOBEC/CMP_deaminase_Zn-bd"/>
</dbReference>
<dbReference type="InterPro" id="IPR002125">
    <property type="entry name" value="CMP_dCMP_dom"/>
</dbReference>
<dbReference type="InterPro" id="IPR013171">
    <property type="entry name" value="Cyd/dCyd_deaminase_Zn-bd"/>
</dbReference>
<dbReference type="InterPro" id="IPR050202">
    <property type="entry name" value="Cyt/Deoxycyt_deaminase"/>
</dbReference>
<dbReference type="InterPro" id="IPR016193">
    <property type="entry name" value="Cytidine_deaminase-like"/>
</dbReference>
<dbReference type="InterPro" id="IPR020797">
    <property type="entry name" value="Cytidine_deaminase_bacteria"/>
</dbReference>
<dbReference type="NCBIfam" id="NF006537">
    <property type="entry name" value="PRK09027.1"/>
    <property type="match status" value="1"/>
</dbReference>
<dbReference type="PANTHER" id="PTHR11644">
    <property type="entry name" value="CYTIDINE DEAMINASE"/>
    <property type="match status" value="1"/>
</dbReference>
<dbReference type="PANTHER" id="PTHR11644:SF2">
    <property type="entry name" value="CYTIDINE DEAMINASE"/>
    <property type="match status" value="1"/>
</dbReference>
<dbReference type="Pfam" id="PF00383">
    <property type="entry name" value="dCMP_cyt_deam_1"/>
    <property type="match status" value="1"/>
</dbReference>
<dbReference type="Pfam" id="PF08211">
    <property type="entry name" value="dCMP_cyt_deam_2"/>
    <property type="match status" value="1"/>
</dbReference>
<dbReference type="PIRSF" id="PIRSF006334">
    <property type="entry name" value="Cdd_plus_pseudo"/>
    <property type="match status" value="1"/>
</dbReference>
<dbReference type="SUPFAM" id="SSF53927">
    <property type="entry name" value="Cytidine deaminase-like"/>
    <property type="match status" value="2"/>
</dbReference>
<dbReference type="PROSITE" id="PS00903">
    <property type="entry name" value="CYT_DCMP_DEAMINASES_1"/>
    <property type="match status" value="1"/>
</dbReference>
<dbReference type="PROSITE" id="PS51747">
    <property type="entry name" value="CYT_DCMP_DEAMINASES_2"/>
    <property type="match status" value="2"/>
</dbReference>
<keyword id="KW-0378">Hydrolase</keyword>
<keyword id="KW-0479">Metal-binding</keyword>
<keyword id="KW-0862">Zinc</keyword>
<evidence type="ECO:0000255" key="1">
    <source>
        <dbReference type="HAMAP-Rule" id="MF_01558"/>
    </source>
</evidence>
<evidence type="ECO:0000255" key="2">
    <source>
        <dbReference type="PROSITE-ProRule" id="PRU01083"/>
    </source>
</evidence>
<sequence length="296" mass="31951">MQDRFIRSITQLPTPLADALIPMLHQNFAGHLDAQQLATLTSASKMTEAEVLLALLPIAAALAKPPISEFYVGAIAKGKSGDIYMGANLELPGEALFHSVHAEQSAISHAWLSGESQIVDIIVNASPCGHCRQFMNELVEGSKISIHLPAQESHPLAYYLPYAFGPKDLNVTSPLMAKQQTEFALDSADPMIIEGLDHAGLSYAPYTQSFAAVVLETRDGATYCGRYAENAAFNPSMLPMQMALSNLVRHNREFSDISRAVLIESSQGKISLVGATMDALHTVAAIELEHIVIDPV</sequence>
<accession>A9KXF0</accession>
<reference key="1">
    <citation type="submission" date="2007-11" db="EMBL/GenBank/DDBJ databases">
        <title>Complete sequence of chromosome of Shewanella baltica OS195.</title>
        <authorList>
            <consortium name="US DOE Joint Genome Institute"/>
            <person name="Copeland A."/>
            <person name="Lucas S."/>
            <person name="Lapidus A."/>
            <person name="Barry K."/>
            <person name="Glavina del Rio T."/>
            <person name="Dalin E."/>
            <person name="Tice H."/>
            <person name="Pitluck S."/>
            <person name="Chain P."/>
            <person name="Malfatti S."/>
            <person name="Shin M."/>
            <person name="Vergez L."/>
            <person name="Schmutz J."/>
            <person name="Larimer F."/>
            <person name="Land M."/>
            <person name="Hauser L."/>
            <person name="Kyrpides N."/>
            <person name="Kim E."/>
            <person name="Brettar I."/>
            <person name="Rodrigues J."/>
            <person name="Konstantinidis K."/>
            <person name="Klappenbach J."/>
            <person name="Hofle M."/>
            <person name="Tiedje J."/>
            <person name="Richardson P."/>
        </authorList>
    </citation>
    <scope>NUCLEOTIDE SEQUENCE [LARGE SCALE GENOMIC DNA]</scope>
    <source>
        <strain>OS195</strain>
    </source>
</reference>
<comment type="function">
    <text evidence="1">This enzyme scavenges exogenous and endogenous cytidine and 2'-deoxycytidine for UMP synthesis.</text>
</comment>
<comment type="catalytic activity">
    <reaction evidence="1">
        <text>cytidine + H2O + H(+) = uridine + NH4(+)</text>
        <dbReference type="Rhea" id="RHEA:16069"/>
        <dbReference type="ChEBI" id="CHEBI:15377"/>
        <dbReference type="ChEBI" id="CHEBI:15378"/>
        <dbReference type="ChEBI" id="CHEBI:16704"/>
        <dbReference type="ChEBI" id="CHEBI:17562"/>
        <dbReference type="ChEBI" id="CHEBI:28938"/>
        <dbReference type="EC" id="3.5.4.5"/>
    </reaction>
</comment>
<comment type="catalytic activity">
    <reaction evidence="1">
        <text>2'-deoxycytidine + H2O + H(+) = 2'-deoxyuridine + NH4(+)</text>
        <dbReference type="Rhea" id="RHEA:13433"/>
        <dbReference type="ChEBI" id="CHEBI:15377"/>
        <dbReference type="ChEBI" id="CHEBI:15378"/>
        <dbReference type="ChEBI" id="CHEBI:15698"/>
        <dbReference type="ChEBI" id="CHEBI:16450"/>
        <dbReference type="ChEBI" id="CHEBI:28938"/>
        <dbReference type="EC" id="3.5.4.5"/>
    </reaction>
</comment>
<comment type="cofactor">
    <cofactor evidence="1">
        <name>Zn(2+)</name>
        <dbReference type="ChEBI" id="CHEBI:29105"/>
    </cofactor>
    <text evidence="1">Binds 1 zinc ion.</text>
</comment>
<comment type="subunit">
    <text evidence="1">Homodimer.</text>
</comment>
<comment type="similarity">
    <text evidence="1">Belongs to the cytidine and deoxycytidylate deaminase family.</text>
</comment>
<organism>
    <name type="scientific">Shewanella baltica (strain OS195)</name>
    <dbReference type="NCBI Taxonomy" id="399599"/>
    <lineage>
        <taxon>Bacteria</taxon>
        <taxon>Pseudomonadati</taxon>
        <taxon>Pseudomonadota</taxon>
        <taxon>Gammaproteobacteria</taxon>
        <taxon>Alteromonadales</taxon>
        <taxon>Shewanellaceae</taxon>
        <taxon>Shewanella</taxon>
    </lineage>
</organism>
<gene>
    <name evidence="1" type="primary">cdd</name>
    <name type="ordered locus">Sbal195_1716</name>
</gene>
<protein>
    <recommendedName>
        <fullName evidence="1">Cytidine deaminase</fullName>
        <ecNumber evidence="1">3.5.4.5</ecNumber>
    </recommendedName>
    <alternativeName>
        <fullName evidence="1">Cytidine aminohydrolase</fullName>
        <shortName evidence="1">CDA</shortName>
    </alternativeName>
</protein>
<feature type="chain" id="PRO_1000087797" description="Cytidine deaminase">
    <location>
        <begin position="1"/>
        <end position="296"/>
    </location>
</feature>
<feature type="domain" description="CMP/dCMP-type deaminase 1" evidence="2">
    <location>
        <begin position="47"/>
        <end position="167"/>
    </location>
</feature>
<feature type="domain" description="CMP/dCMP-type deaminase 2" evidence="2">
    <location>
        <begin position="186"/>
        <end position="296"/>
    </location>
</feature>
<feature type="active site" description="Proton donor" evidence="1">
    <location>
        <position position="103"/>
    </location>
</feature>
<feature type="binding site" evidence="1">
    <location>
        <begin position="88"/>
        <end position="90"/>
    </location>
    <ligand>
        <name>substrate</name>
    </ligand>
</feature>
<feature type="binding site" evidence="1">
    <location>
        <position position="101"/>
    </location>
    <ligand>
        <name>Zn(2+)</name>
        <dbReference type="ChEBI" id="CHEBI:29105"/>
        <note>catalytic</note>
    </ligand>
</feature>
<feature type="binding site" evidence="1">
    <location>
        <position position="128"/>
    </location>
    <ligand>
        <name>Zn(2+)</name>
        <dbReference type="ChEBI" id="CHEBI:29105"/>
        <note>catalytic</note>
    </ligand>
</feature>
<feature type="binding site" evidence="1">
    <location>
        <position position="131"/>
    </location>
    <ligand>
        <name>Zn(2+)</name>
        <dbReference type="ChEBI" id="CHEBI:29105"/>
        <note>catalytic</note>
    </ligand>
</feature>
<name>CDD_SHEB9</name>